<protein>
    <recommendedName>
        <fullName evidence="1">Protein SlyX homolog</fullName>
    </recommendedName>
</protein>
<gene>
    <name evidence="1" type="primary">slyX</name>
    <name type="ordered locus">NMC2044</name>
</gene>
<feature type="chain" id="PRO_1000045720" description="Protein SlyX homolog">
    <location>
        <begin position="1"/>
        <end position="74"/>
    </location>
</feature>
<accession>A1KWE2</accession>
<proteinExistence type="inferred from homology"/>
<sequence>MDAVQELEHRITELEIQSALQEDVIAGLNAMVAELRQTLDLQQAQLRLLYQKMQDRNPDAQEPYSLRDEIPPHY</sequence>
<evidence type="ECO:0000255" key="1">
    <source>
        <dbReference type="HAMAP-Rule" id="MF_00715"/>
    </source>
</evidence>
<organism>
    <name type="scientific">Neisseria meningitidis serogroup C / serotype 2a (strain ATCC 700532 / DSM 15464 / FAM18)</name>
    <dbReference type="NCBI Taxonomy" id="272831"/>
    <lineage>
        <taxon>Bacteria</taxon>
        <taxon>Pseudomonadati</taxon>
        <taxon>Pseudomonadota</taxon>
        <taxon>Betaproteobacteria</taxon>
        <taxon>Neisseriales</taxon>
        <taxon>Neisseriaceae</taxon>
        <taxon>Neisseria</taxon>
    </lineage>
</organism>
<comment type="similarity">
    <text evidence="1">Belongs to the SlyX family.</text>
</comment>
<reference key="1">
    <citation type="journal article" date="2007" name="PLoS Genet.">
        <title>Meningococcal genetic variation mechanisms viewed through comparative analysis of serogroup C strain FAM18.</title>
        <authorList>
            <person name="Bentley S.D."/>
            <person name="Vernikos G.S."/>
            <person name="Snyder L.A.S."/>
            <person name="Churcher C."/>
            <person name="Arrowsmith C."/>
            <person name="Chillingworth T."/>
            <person name="Cronin A."/>
            <person name="Davis P.H."/>
            <person name="Holroyd N.E."/>
            <person name="Jagels K."/>
            <person name="Maddison M."/>
            <person name="Moule S."/>
            <person name="Rabbinowitsch E."/>
            <person name="Sharp S."/>
            <person name="Unwin L."/>
            <person name="Whitehead S."/>
            <person name="Quail M.A."/>
            <person name="Achtman M."/>
            <person name="Barrell B.G."/>
            <person name="Saunders N.J."/>
            <person name="Parkhill J."/>
        </authorList>
    </citation>
    <scope>NUCLEOTIDE SEQUENCE [LARGE SCALE GENOMIC DNA]</scope>
    <source>
        <strain>ATCC 700532 / DSM 15464 / FAM18</strain>
    </source>
</reference>
<dbReference type="EMBL" id="AM421808">
    <property type="protein sequence ID" value="CAM11199.1"/>
    <property type="molecule type" value="Genomic_DNA"/>
</dbReference>
<dbReference type="RefSeq" id="WP_002218191.1">
    <property type="nucleotide sequence ID" value="NC_008767.1"/>
</dbReference>
<dbReference type="SMR" id="A1KWE2"/>
<dbReference type="KEGG" id="nmc:NMC2044"/>
<dbReference type="HOGENOM" id="CLU_180796_3_1_4"/>
<dbReference type="Proteomes" id="UP000002286">
    <property type="component" value="Chromosome"/>
</dbReference>
<dbReference type="Gene3D" id="1.20.5.300">
    <property type="match status" value="1"/>
</dbReference>
<dbReference type="HAMAP" id="MF_00715">
    <property type="entry name" value="SlyX"/>
    <property type="match status" value="1"/>
</dbReference>
<dbReference type="InterPro" id="IPR007236">
    <property type="entry name" value="SlyX"/>
</dbReference>
<dbReference type="NCBIfam" id="NF003316">
    <property type="entry name" value="PRK04325.1"/>
    <property type="match status" value="1"/>
</dbReference>
<dbReference type="PANTHER" id="PTHR36508">
    <property type="entry name" value="PROTEIN SLYX"/>
    <property type="match status" value="1"/>
</dbReference>
<dbReference type="PANTHER" id="PTHR36508:SF1">
    <property type="entry name" value="PROTEIN SLYX"/>
    <property type="match status" value="1"/>
</dbReference>
<dbReference type="Pfam" id="PF04102">
    <property type="entry name" value="SlyX"/>
    <property type="match status" value="1"/>
</dbReference>
<name>SLYX_NEIMF</name>